<evidence type="ECO:0000255" key="1">
    <source>
        <dbReference type="HAMAP-Rule" id="MF_00182"/>
    </source>
</evidence>
<gene>
    <name evidence="1" type="primary">fmt</name>
    <name type="ordered locus">PLES_00171</name>
</gene>
<dbReference type="EC" id="2.1.2.9" evidence="1"/>
<dbReference type="EMBL" id="FM209186">
    <property type="protein sequence ID" value="CAW24745.1"/>
    <property type="molecule type" value="Genomic_DNA"/>
</dbReference>
<dbReference type="RefSeq" id="WP_003107057.1">
    <property type="nucleotide sequence ID" value="NC_011770.1"/>
</dbReference>
<dbReference type="SMR" id="B7V0Q3"/>
<dbReference type="KEGG" id="pag:PLES_00171"/>
<dbReference type="HOGENOM" id="CLU_033347_1_2_6"/>
<dbReference type="GO" id="GO:0005829">
    <property type="term" value="C:cytosol"/>
    <property type="evidence" value="ECO:0007669"/>
    <property type="project" value="TreeGrafter"/>
</dbReference>
<dbReference type="GO" id="GO:0004479">
    <property type="term" value="F:methionyl-tRNA formyltransferase activity"/>
    <property type="evidence" value="ECO:0007669"/>
    <property type="project" value="UniProtKB-UniRule"/>
</dbReference>
<dbReference type="CDD" id="cd08646">
    <property type="entry name" value="FMT_core_Met-tRNA-FMT_N"/>
    <property type="match status" value="1"/>
</dbReference>
<dbReference type="CDD" id="cd08704">
    <property type="entry name" value="Met_tRNA_FMT_C"/>
    <property type="match status" value="1"/>
</dbReference>
<dbReference type="FunFam" id="3.10.25.10:FF:000009">
    <property type="entry name" value="Methionyl-tRNA formyltransferase"/>
    <property type="match status" value="1"/>
</dbReference>
<dbReference type="FunFam" id="3.40.50.12230:FF:000001">
    <property type="entry name" value="Methionyl-tRNA formyltransferase"/>
    <property type="match status" value="1"/>
</dbReference>
<dbReference type="FunFam" id="3.40.50.170:FF:000003">
    <property type="entry name" value="Methionyl-tRNA formyltransferase"/>
    <property type="match status" value="1"/>
</dbReference>
<dbReference type="Gene3D" id="3.10.25.10">
    <property type="entry name" value="Formyl transferase, C-terminal domain"/>
    <property type="match status" value="1"/>
</dbReference>
<dbReference type="Gene3D" id="3.40.50.170">
    <property type="entry name" value="Formyl transferase, N-terminal domain"/>
    <property type="match status" value="1"/>
</dbReference>
<dbReference type="HAMAP" id="MF_00182">
    <property type="entry name" value="Formyl_trans"/>
    <property type="match status" value="1"/>
</dbReference>
<dbReference type="InterPro" id="IPR005794">
    <property type="entry name" value="Fmt"/>
</dbReference>
<dbReference type="InterPro" id="IPR005793">
    <property type="entry name" value="Formyl_trans_C"/>
</dbReference>
<dbReference type="InterPro" id="IPR037022">
    <property type="entry name" value="Formyl_trans_C_sf"/>
</dbReference>
<dbReference type="InterPro" id="IPR002376">
    <property type="entry name" value="Formyl_transf_N"/>
</dbReference>
<dbReference type="InterPro" id="IPR036477">
    <property type="entry name" value="Formyl_transf_N_sf"/>
</dbReference>
<dbReference type="InterPro" id="IPR011034">
    <property type="entry name" value="Formyl_transferase-like_C_sf"/>
</dbReference>
<dbReference type="InterPro" id="IPR001555">
    <property type="entry name" value="GART_AS"/>
</dbReference>
<dbReference type="InterPro" id="IPR044135">
    <property type="entry name" value="Met-tRNA-FMT_C"/>
</dbReference>
<dbReference type="InterPro" id="IPR041711">
    <property type="entry name" value="Met-tRNA-FMT_N"/>
</dbReference>
<dbReference type="NCBIfam" id="TIGR00460">
    <property type="entry name" value="fmt"/>
    <property type="match status" value="1"/>
</dbReference>
<dbReference type="PANTHER" id="PTHR11138">
    <property type="entry name" value="METHIONYL-TRNA FORMYLTRANSFERASE"/>
    <property type="match status" value="1"/>
</dbReference>
<dbReference type="PANTHER" id="PTHR11138:SF5">
    <property type="entry name" value="METHIONYL-TRNA FORMYLTRANSFERASE, MITOCHONDRIAL"/>
    <property type="match status" value="1"/>
</dbReference>
<dbReference type="Pfam" id="PF02911">
    <property type="entry name" value="Formyl_trans_C"/>
    <property type="match status" value="1"/>
</dbReference>
<dbReference type="Pfam" id="PF00551">
    <property type="entry name" value="Formyl_trans_N"/>
    <property type="match status" value="1"/>
</dbReference>
<dbReference type="SUPFAM" id="SSF50486">
    <property type="entry name" value="FMT C-terminal domain-like"/>
    <property type="match status" value="1"/>
</dbReference>
<dbReference type="SUPFAM" id="SSF53328">
    <property type="entry name" value="Formyltransferase"/>
    <property type="match status" value="1"/>
</dbReference>
<dbReference type="PROSITE" id="PS00373">
    <property type="entry name" value="GART"/>
    <property type="match status" value="1"/>
</dbReference>
<sequence length="314" mass="33055">MSQALRIVFAGTPEFAAEHLKALLDTPHRIVAVYTQPDRPAGRGQKLMPSAVKNLALEHGLPVMQPQSLRNAEAQAELAALRADLMVVVAYGLILPQAVLDIPRLGCINSHASLLPRWRGAAPIQRAVEAGDAESGVTVMQMEAGLDTGPMLLKVSTPISAADTGGSLHDRLAALGPKAVIEAIAGLAAGTLHGEIQDDALATYAHKLNKDEARLDWSRPAVELERQVRAFTPWPVCHTSLADAPLKVLGASLGQGSGAPGTILEASRDGLLVACGEGALRLTRLQLPGGKPLAFADLYNSRREQFAAGQVLGQ</sequence>
<protein>
    <recommendedName>
        <fullName evidence="1">Methionyl-tRNA formyltransferase</fullName>
        <ecNumber evidence="1">2.1.2.9</ecNumber>
    </recommendedName>
</protein>
<accession>B7V0Q3</accession>
<feature type="chain" id="PRO_1000118485" description="Methionyl-tRNA formyltransferase">
    <location>
        <begin position="1"/>
        <end position="314"/>
    </location>
</feature>
<feature type="binding site" evidence="1">
    <location>
        <begin position="113"/>
        <end position="116"/>
    </location>
    <ligand>
        <name>(6S)-5,6,7,8-tetrahydrofolate</name>
        <dbReference type="ChEBI" id="CHEBI:57453"/>
    </ligand>
</feature>
<reference key="1">
    <citation type="journal article" date="2009" name="Genome Res.">
        <title>Newly introduced genomic prophage islands are critical determinants of in vivo competitiveness in the Liverpool epidemic strain of Pseudomonas aeruginosa.</title>
        <authorList>
            <person name="Winstanley C."/>
            <person name="Langille M.G.I."/>
            <person name="Fothergill J.L."/>
            <person name="Kukavica-Ibrulj I."/>
            <person name="Paradis-Bleau C."/>
            <person name="Sanschagrin F."/>
            <person name="Thomson N.R."/>
            <person name="Winsor G.L."/>
            <person name="Quail M.A."/>
            <person name="Lennard N."/>
            <person name="Bignell A."/>
            <person name="Clarke L."/>
            <person name="Seeger K."/>
            <person name="Saunders D."/>
            <person name="Harris D."/>
            <person name="Parkhill J."/>
            <person name="Hancock R.E.W."/>
            <person name="Brinkman F.S.L."/>
            <person name="Levesque R.C."/>
        </authorList>
    </citation>
    <scope>NUCLEOTIDE SEQUENCE [LARGE SCALE GENOMIC DNA]</scope>
    <source>
        <strain>LESB58</strain>
    </source>
</reference>
<organism>
    <name type="scientific">Pseudomonas aeruginosa (strain LESB58)</name>
    <dbReference type="NCBI Taxonomy" id="557722"/>
    <lineage>
        <taxon>Bacteria</taxon>
        <taxon>Pseudomonadati</taxon>
        <taxon>Pseudomonadota</taxon>
        <taxon>Gammaproteobacteria</taxon>
        <taxon>Pseudomonadales</taxon>
        <taxon>Pseudomonadaceae</taxon>
        <taxon>Pseudomonas</taxon>
    </lineage>
</organism>
<comment type="function">
    <text evidence="1">Attaches a formyl group to the free amino group of methionyl-tRNA(fMet). The formyl group appears to play a dual role in the initiator identity of N-formylmethionyl-tRNA by promoting its recognition by IF2 and preventing the misappropriation of this tRNA by the elongation apparatus.</text>
</comment>
<comment type="catalytic activity">
    <reaction evidence="1">
        <text>L-methionyl-tRNA(fMet) + (6R)-10-formyltetrahydrofolate = N-formyl-L-methionyl-tRNA(fMet) + (6S)-5,6,7,8-tetrahydrofolate + H(+)</text>
        <dbReference type="Rhea" id="RHEA:24380"/>
        <dbReference type="Rhea" id="RHEA-COMP:9952"/>
        <dbReference type="Rhea" id="RHEA-COMP:9953"/>
        <dbReference type="ChEBI" id="CHEBI:15378"/>
        <dbReference type="ChEBI" id="CHEBI:57453"/>
        <dbReference type="ChEBI" id="CHEBI:78530"/>
        <dbReference type="ChEBI" id="CHEBI:78844"/>
        <dbReference type="ChEBI" id="CHEBI:195366"/>
        <dbReference type="EC" id="2.1.2.9"/>
    </reaction>
</comment>
<comment type="similarity">
    <text evidence="1">Belongs to the Fmt family.</text>
</comment>
<keyword id="KW-0648">Protein biosynthesis</keyword>
<keyword id="KW-0808">Transferase</keyword>
<name>FMT_PSEA8</name>
<proteinExistence type="inferred from homology"/>